<comment type="function">
    <text evidence="1">Aquaporins facilitate the transport of water and small neutral solutes across cell membranes. May be involved in transport from the vacuolar compartment to the cytoplasm (By similarity).</text>
</comment>
<comment type="subcellular location">
    <subcellularLocation>
        <location evidence="1">Vacuole membrane</location>
        <topology evidence="1">Multi-pass membrane protein</topology>
    </subcellularLocation>
    <text>Tonoplast.</text>
</comment>
<comment type="tissue specificity">
    <text evidence="3">Expressed in roots and anthers.</text>
</comment>
<comment type="induction">
    <text evidence="3">Circadian-regulation. Expression is higher during the light phase than during the dark phase.</text>
</comment>
<comment type="domain">
    <text>Aquaporins contain two tandem repeats each containing three membrane-spanning domains and a pore-forming loop with the signature motif Asn-Pro-Ala (NPA).</text>
</comment>
<comment type="similarity">
    <text evidence="4">Belongs to the MIP/aquaporin (TC 1.A.8) family. TIP (TC 1.A.8.10) subfamily.</text>
</comment>
<organism>
    <name type="scientific">Oryza sativa subsp. japonica</name>
    <name type="common">Rice</name>
    <dbReference type="NCBI Taxonomy" id="39947"/>
    <lineage>
        <taxon>Eukaryota</taxon>
        <taxon>Viridiplantae</taxon>
        <taxon>Streptophyta</taxon>
        <taxon>Embryophyta</taxon>
        <taxon>Tracheophyta</taxon>
        <taxon>Spermatophyta</taxon>
        <taxon>Magnoliopsida</taxon>
        <taxon>Liliopsida</taxon>
        <taxon>Poales</taxon>
        <taxon>Poaceae</taxon>
        <taxon>BOP clade</taxon>
        <taxon>Oryzoideae</taxon>
        <taxon>Oryzeae</taxon>
        <taxon>Oryzinae</taxon>
        <taxon>Oryza</taxon>
        <taxon>Oryza sativa</taxon>
    </lineage>
</organism>
<evidence type="ECO:0000250" key="1"/>
<evidence type="ECO:0000255" key="2"/>
<evidence type="ECO:0000269" key="3">
    <source>
    </source>
</evidence>
<evidence type="ECO:0000305" key="4"/>
<keyword id="KW-0472">Membrane</keyword>
<keyword id="KW-1185">Reference proteome</keyword>
<keyword id="KW-0677">Repeat</keyword>
<keyword id="KW-0812">Transmembrane</keyword>
<keyword id="KW-1133">Transmembrane helix</keyword>
<keyword id="KW-0813">Transport</keyword>
<keyword id="KW-0926">Vacuole</keyword>
<proteinExistence type="evidence at transcript level"/>
<accession>Q7XA61</accession>
<accession>Q0DYZ2</accession>
<accession>Q949B9</accession>
<protein>
    <recommendedName>
        <fullName>Probable aquaporin TIP2-1</fullName>
    </recommendedName>
    <alternativeName>
        <fullName>Tonoplast intrinsic protein 2-1</fullName>
        <shortName>OsTIP2;1</shortName>
    </alternativeName>
</protein>
<feature type="chain" id="PRO_0000064023" description="Probable aquaporin TIP2-1">
    <location>
        <begin position="1"/>
        <end position="248"/>
    </location>
</feature>
<feature type="transmembrane region" description="Helical; Name=1" evidence="2">
    <location>
        <begin position="20"/>
        <end position="40"/>
    </location>
</feature>
<feature type="transmembrane region" description="Helical; Name=2" evidence="2">
    <location>
        <begin position="54"/>
        <end position="74"/>
    </location>
</feature>
<feature type="transmembrane region" description="Helical; Name=3" evidence="2">
    <location>
        <begin position="97"/>
        <end position="119"/>
    </location>
</feature>
<feature type="transmembrane region" description="Helical; Name=4" evidence="2">
    <location>
        <begin position="141"/>
        <end position="161"/>
    </location>
</feature>
<feature type="transmembrane region" description="Helical; Name=5" evidence="2">
    <location>
        <begin position="168"/>
        <end position="188"/>
    </location>
</feature>
<feature type="transmembrane region" description="Helical; Name=6" evidence="2">
    <location>
        <begin position="217"/>
        <end position="237"/>
    </location>
</feature>
<feature type="short sequence motif" description="NPA 1">
    <location>
        <begin position="83"/>
        <end position="85"/>
    </location>
</feature>
<feature type="short sequence motif" description="NPA 2">
    <location>
        <begin position="196"/>
        <end position="198"/>
    </location>
</feature>
<reference key="1">
    <citation type="submission" date="2003-07" db="EMBL/GenBank/DDBJ databases">
        <title>Molecular characterization and expression analysis of tonoplast intrinsic protein isoforms from rice.</title>
        <authorList>
            <person name="Takahashi H."/>
            <person name="Morita S."/>
            <person name="Masumura T."/>
            <person name="Tanaka K."/>
        </authorList>
    </citation>
    <scope>NUCLEOTIDE SEQUENCE [MRNA]</scope>
    <source>
        <strain>cv. Nipponbare</strain>
    </source>
</reference>
<reference key="2">
    <citation type="journal article" date="2001" name="Genome Res.">
        <title>Conservation of microstructure between a sequenced region of the genome of rice and multiple segments of the genome of Arabidopsis thaliana.</title>
        <authorList>
            <person name="Mayer K."/>
            <person name="Murphy G."/>
            <person name="Tarchini R."/>
            <person name="Wambutt R."/>
            <person name="Volckaert G."/>
            <person name="Pohl T."/>
            <person name="Duesterhoeft A."/>
            <person name="Stiekema W."/>
            <person name="Entian K.-D."/>
            <person name="Terryn N."/>
            <person name="Lemcke K."/>
            <person name="Haase D."/>
            <person name="Hall C.R."/>
            <person name="van Dodeweerd A.-M."/>
            <person name="Tingey S.V."/>
            <person name="Mewes H.-W."/>
            <person name="Bevan M.W."/>
            <person name="Bancroft I."/>
        </authorList>
    </citation>
    <scope>NUCLEOTIDE SEQUENCE [GENOMIC DNA]</scope>
</reference>
<reference key="3">
    <citation type="journal article" date="2005" name="Nature">
        <title>The map-based sequence of the rice genome.</title>
        <authorList>
            <consortium name="International rice genome sequencing project (IRGSP)"/>
        </authorList>
    </citation>
    <scope>NUCLEOTIDE SEQUENCE [LARGE SCALE GENOMIC DNA]</scope>
    <source>
        <strain>cv. Nipponbare</strain>
    </source>
</reference>
<reference key="4">
    <citation type="journal article" date="2008" name="Nucleic Acids Res.">
        <title>The rice annotation project database (RAP-DB): 2008 update.</title>
        <authorList>
            <consortium name="The rice annotation project (RAP)"/>
        </authorList>
    </citation>
    <scope>GENOME REANNOTATION</scope>
    <source>
        <strain>cv. Nipponbare</strain>
    </source>
</reference>
<reference key="5">
    <citation type="journal article" date="2013" name="Rice">
        <title>Improvement of the Oryza sativa Nipponbare reference genome using next generation sequence and optical map data.</title>
        <authorList>
            <person name="Kawahara Y."/>
            <person name="de la Bastide M."/>
            <person name="Hamilton J.P."/>
            <person name="Kanamori H."/>
            <person name="McCombie W.R."/>
            <person name="Ouyang S."/>
            <person name="Schwartz D.C."/>
            <person name="Tanaka T."/>
            <person name="Wu J."/>
            <person name="Zhou S."/>
            <person name="Childs K.L."/>
            <person name="Davidson R.M."/>
            <person name="Lin H."/>
            <person name="Quesada-Ocampo L."/>
            <person name="Vaillancourt B."/>
            <person name="Sakai H."/>
            <person name="Lee S.S."/>
            <person name="Kim J."/>
            <person name="Numa H."/>
            <person name="Itoh T."/>
            <person name="Buell C.R."/>
            <person name="Matsumoto T."/>
        </authorList>
    </citation>
    <scope>GENOME REANNOTATION</scope>
    <source>
        <strain>cv. Nipponbare</strain>
    </source>
</reference>
<reference key="6">
    <citation type="journal article" date="2005" name="PLoS Biol.">
        <title>The genomes of Oryza sativa: a history of duplications.</title>
        <authorList>
            <person name="Yu J."/>
            <person name="Wang J."/>
            <person name="Lin W."/>
            <person name="Li S."/>
            <person name="Li H."/>
            <person name="Zhou J."/>
            <person name="Ni P."/>
            <person name="Dong W."/>
            <person name="Hu S."/>
            <person name="Zeng C."/>
            <person name="Zhang J."/>
            <person name="Zhang Y."/>
            <person name="Li R."/>
            <person name="Xu Z."/>
            <person name="Li S."/>
            <person name="Li X."/>
            <person name="Zheng H."/>
            <person name="Cong L."/>
            <person name="Lin L."/>
            <person name="Yin J."/>
            <person name="Geng J."/>
            <person name="Li G."/>
            <person name="Shi J."/>
            <person name="Liu J."/>
            <person name="Lv H."/>
            <person name="Li J."/>
            <person name="Wang J."/>
            <person name="Deng Y."/>
            <person name="Ran L."/>
            <person name="Shi X."/>
            <person name="Wang X."/>
            <person name="Wu Q."/>
            <person name="Li C."/>
            <person name="Ren X."/>
            <person name="Wang J."/>
            <person name="Wang X."/>
            <person name="Li D."/>
            <person name="Liu D."/>
            <person name="Zhang X."/>
            <person name="Ji Z."/>
            <person name="Zhao W."/>
            <person name="Sun Y."/>
            <person name="Zhang Z."/>
            <person name="Bao J."/>
            <person name="Han Y."/>
            <person name="Dong L."/>
            <person name="Ji J."/>
            <person name="Chen P."/>
            <person name="Wu S."/>
            <person name="Liu J."/>
            <person name="Xiao Y."/>
            <person name="Bu D."/>
            <person name="Tan J."/>
            <person name="Yang L."/>
            <person name="Ye C."/>
            <person name="Zhang J."/>
            <person name="Xu J."/>
            <person name="Zhou Y."/>
            <person name="Yu Y."/>
            <person name="Zhang B."/>
            <person name="Zhuang S."/>
            <person name="Wei H."/>
            <person name="Liu B."/>
            <person name="Lei M."/>
            <person name="Yu H."/>
            <person name="Li Y."/>
            <person name="Xu H."/>
            <person name="Wei S."/>
            <person name="He X."/>
            <person name="Fang L."/>
            <person name="Zhang Z."/>
            <person name="Zhang Y."/>
            <person name="Huang X."/>
            <person name="Su Z."/>
            <person name="Tong W."/>
            <person name="Li J."/>
            <person name="Tong Z."/>
            <person name="Li S."/>
            <person name="Ye J."/>
            <person name="Wang L."/>
            <person name="Fang L."/>
            <person name="Lei T."/>
            <person name="Chen C.-S."/>
            <person name="Chen H.-C."/>
            <person name="Xu Z."/>
            <person name="Li H."/>
            <person name="Huang H."/>
            <person name="Zhang F."/>
            <person name="Xu H."/>
            <person name="Li N."/>
            <person name="Zhao C."/>
            <person name="Li S."/>
            <person name="Dong L."/>
            <person name="Huang Y."/>
            <person name="Li L."/>
            <person name="Xi Y."/>
            <person name="Qi Q."/>
            <person name="Li W."/>
            <person name="Zhang B."/>
            <person name="Hu W."/>
            <person name="Zhang Y."/>
            <person name="Tian X."/>
            <person name="Jiao Y."/>
            <person name="Liang X."/>
            <person name="Jin J."/>
            <person name="Gao L."/>
            <person name="Zheng W."/>
            <person name="Hao B."/>
            <person name="Liu S.-M."/>
            <person name="Wang W."/>
            <person name="Yuan L."/>
            <person name="Cao M."/>
            <person name="McDermott J."/>
            <person name="Samudrala R."/>
            <person name="Wang J."/>
            <person name="Wong G.K.-S."/>
            <person name="Yang H."/>
        </authorList>
    </citation>
    <scope>NUCLEOTIDE SEQUENCE [LARGE SCALE GENOMIC DNA]</scope>
    <source>
        <strain>cv. Nipponbare</strain>
    </source>
</reference>
<reference key="7">
    <citation type="journal article" date="2003" name="Science">
        <title>Collection, mapping, and annotation of over 28,000 cDNA clones from japonica rice.</title>
        <authorList>
            <consortium name="The rice full-length cDNA consortium"/>
        </authorList>
    </citation>
    <scope>NUCLEOTIDE SEQUENCE [LARGE SCALE MRNA] OF 43-248</scope>
    <source>
        <strain>cv. Nipponbare</strain>
    </source>
</reference>
<reference key="8">
    <citation type="journal article" date="2005" name="Plant Cell Physiol.">
        <title>Identification of 33 rice aquaporin genes and analysis of their expression and function.</title>
        <authorList>
            <person name="Sakurai J."/>
            <person name="Ishikawa F."/>
            <person name="Yamaguchi T."/>
            <person name="Uemura M."/>
            <person name="Maeshima M."/>
        </authorList>
    </citation>
    <scope>NOMENCLATURE</scope>
    <scope>TISSUE SPECIFICITY</scope>
    <scope>INDUCTION</scope>
</reference>
<gene>
    <name type="primary">TIP2-1</name>
    <name type="synonym">TIP2</name>
    <name type="synonym">W950ERIPDM</name>
    <name type="ordered locus">Os02g0658100</name>
    <name type="ordered locus">LOC_Os02g44080</name>
    <name type="ORF">OJ1112_F09.18</name>
    <name type="ORF">OsJ_007553</name>
    <name type="ORF">P0519E06.48</name>
</gene>
<name>TIP21_ORYSJ</name>
<sequence>MVKLAFGSLGDSFSATSVKAYVAEFIATLLFVFAGVGSAIAYGQLTNGGALDPAGLVAIAIAHALALFVGVSVAANISGGHLNPAVTFGLAVGGHITILTGLFYWIAQLLGASIACLLLKFVTHGKAIPTHGVAGISELEGVVMEIVITFALVYTVYATAADPKKGSLGTIAPIAIGFIVGANILAAGPFSGGSMNPARSFGPAVAAGNFAGNWVYWVGPLIGGGLAGLVYGDVFIGSYQPVADQDYA</sequence>
<dbReference type="EMBL" id="AB114830">
    <property type="protein sequence ID" value="BAC79359.1"/>
    <property type="molecule type" value="mRNA"/>
</dbReference>
<dbReference type="EMBL" id="AJ307662">
    <property type="protein sequence ID" value="CAC39073.1"/>
    <property type="molecule type" value="Genomic_DNA"/>
</dbReference>
<dbReference type="EMBL" id="AP005006">
    <property type="protein sequence ID" value="BAD25694.1"/>
    <property type="molecule type" value="Genomic_DNA"/>
</dbReference>
<dbReference type="EMBL" id="AP005289">
    <property type="protein sequence ID" value="BAD25765.1"/>
    <property type="molecule type" value="Genomic_DNA"/>
</dbReference>
<dbReference type="EMBL" id="AP008208">
    <property type="protein sequence ID" value="BAF09546.1"/>
    <property type="molecule type" value="Genomic_DNA"/>
</dbReference>
<dbReference type="EMBL" id="AP014958">
    <property type="status" value="NOT_ANNOTATED_CDS"/>
    <property type="molecule type" value="Genomic_DNA"/>
</dbReference>
<dbReference type="EMBL" id="CM000139">
    <property type="protein sequence ID" value="EAZ24070.1"/>
    <property type="molecule type" value="Genomic_DNA"/>
</dbReference>
<dbReference type="EMBL" id="AK064728">
    <property type="status" value="NOT_ANNOTATED_CDS"/>
    <property type="molecule type" value="mRNA"/>
</dbReference>
<dbReference type="RefSeq" id="XP_015623408.1">
    <property type="nucleotide sequence ID" value="XM_015767922.1"/>
</dbReference>
<dbReference type="SMR" id="Q7XA61"/>
<dbReference type="FunCoup" id="Q7XA61">
    <property type="interactions" value="422"/>
</dbReference>
<dbReference type="STRING" id="39947.Q7XA61"/>
<dbReference type="PaxDb" id="39947-Q7XA61"/>
<dbReference type="KEGG" id="dosa:Os02g0658100"/>
<dbReference type="eggNOG" id="KOG0223">
    <property type="taxonomic scope" value="Eukaryota"/>
</dbReference>
<dbReference type="HOGENOM" id="CLU_020019_3_4_1"/>
<dbReference type="InParanoid" id="Q7XA61"/>
<dbReference type="OrthoDB" id="3222at2759"/>
<dbReference type="Proteomes" id="UP000000763">
    <property type="component" value="Chromosome 2"/>
</dbReference>
<dbReference type="Proteomes" id="UP000007752">
    <property type="component" value="Chromosome 2"/>
</dbReference>
<dbReference type="Proteomes" id="UP000059680">
    <property type="component" value="Chromosome 2"/>
</dbReference>
<dbReference type="GO" id="GO:0009705">
    <property type="term" value="C:plant-type vacuole membrane"/>
    <property type="evidence" value="ECO:0000318"/>
    <property type="project" value="GO_Central"/>
</dbReference>
<dbReference type="GO" id="GO:0015250">
    <property type="term" value="F:water channel activity"/>
    <property type="evidence" value="ECO:0000318"/>
    <property type="project" value="GO_Central"/>
</dbReference>
<dbReference type="GO" id="GO:0006833">
    <property type="term" value="P:water transport"/>
    <property type="evidence" value="ECO:0000318"/>
    <property type="project" value="GO_Central"/>
</dbReference>
<dbReference type="CDD" id="cd00333">
    <property type="entry name" value="MIP"/>
    <property type="match status" value="1"/>
</dbReference>
<dbReference type="FunFam" id="1.20.1080.10:FF:000002">
    <property type="entry name" value="Probable aquaporin TIP1-1"/>
    <property type="match status" value="1"/>
</dbReference>
<dbReference type="Gene3D" id="1.20.1080.10">
    <property type="entry name" value="Glycerol uptake facilitator protein"/>
    <property type="match status" value="1"/>
</dbReference>
<dbReference type="InterPro" id="IPR023271">
    <property type="entry name" value="Aquaporin-like"/>
</dbReference>
<dbReference type="InterPro" id="IPR034294">
    <property type="entry name" value="Aquaporin_transptr"/>
</dbReference>
<dbReference type="InterPro" id="IPR000425">
    <property type="entry name" value="MIP"/>
</dbReference>
<dbReference type="InterPro" id="IPR022357">
    <property type="entry name" value="MIP_CS"/>
</dbReference>
<dbReference type="NCBIfam" id="TIGR00861">
    <property type="entry name" value="MIP"/>
    <property type="match status" value="1"/>
</dbReference>
<dbReference type="PANTHER" id="PTHR45665:SF37">
    <property type="entry name" value="AQUAPORIN TIP2-3-RELATED"/>
    <property type="match status" value="1"/>
</dbReference>
<dbReference type="PANTHER" id="PTHR45665">
    <property type="entry name" value="AQUAPORIN-8"/>
    <property type="match status" value="1"/>
</dbReference>
<dbReference type="Pfam" id="PF00230">
    <property type="entry name" value="MIP"/>
    <property type="match status" value="1"/>
</dbReference>
<dbReference type="PRINTS" id="PR00783">
    <property type="entry name" value="MINTRINSICP"/>
</dbReference>
<dbReference type="SUPFAM" id="SSF81338">
    <property type="entry name" value="Aquaporin-like"/>
    <property type="match status" value="1"/>
</dbReference>
<dbReference type="PROSITE" id="PS00221">
    <property type="entry name" value="MIP"/>
    <property type="match status" value="1"/>
</dbReference>